<evidence type="ECO:0000250" key="1"/>
<evidence type="ECO:0000255" key="2"/>
<evidence type="ECO:0000305" key="3"/>
<reference key="1">
    <citation type="journal article" date="2000" name="Nature">
        <title>The genome sequence of the plant pathogen Xylella fastidiosa.</title>
        <authorList>
            <person name="Simpson A.J.G."/>
            <person name="Reinach F.C."/>
            <person name="Arruda P."/>
            <person name="Abreu F.A."/>
            <person name="Acencio M."/>
            <person name="Alvarenga R."/>
            <person name="Alves L.M.C."/>
            <person name="Araya J.E."/>
            <person name="Baia G.S."/>
            <person name="Baptista C.S."/>
            <person name="Barros M.H."/>
            <person name="Bonaccorsi E.D."/>
            <person name="Bordin S."/>
            <person name="Bove J.M."/>
            <person name="Briones M.R.S."/>
            <person name="Bueno M.R.P."/>
            <person name="Camargo A.A."/>
            <person name="Camargo L.E.A."/>
            <person name="Carraro D.M."/>
            <person name="Carrer H."/>
            <person name="Colauto N.B."/>
            <person name="Colombo C."/>
            <person name="Costa F.F."/>
            <person name="Costa M.C.R."/>
            <person name="Costa-Neto C.M."/>
            <person name="Coutinho L.L."/>
            <person name="Cristofani M."/>
            <person name="Dias-Neto E."/>
            <person name="Docena C."/>
            <person name="El-Dorry H."/>
            <person name="Facincani A.P."/>
            <person name="Ferreira A.J.S."/>
            <person name="Ferreira V.C.A."/>
            <person name="Ferro J.A."/>
            <person name="Fraga J.S."/>
            <person name="Franca S.C."/>
            <person name="Franco M.C."/>
            <person name="Frohme M."/>
            <person name="Furlan L.R."/>
            <person name="Garnier M."/>
            <person name="Goldman G.H."/>
            <person name="Goldman M.H.S."/>
            <person name="Gomes S.L."/>
            <person name="Gruber A."/>
            <person name="Ho P.L."/>
            <person name="Hoheisel J.D."/>
            <person name="Junqueira M.L."/>
            <person name="Kemper E.L."/>
            <person name="Kitajima J.P."/>
            <person name="Krieger J.E."/>
            <person name="Kuramae E.E."/>
            <person name="Laigret F."/>
            <person name="Lambais M.R."/>
            <person name="Leite L.C.C."/>
            <person name="Lemos E.G.M."/>
            <person name="Lemos M.V.F."/>
            <person name="Lopes S.A."/>
            <person name="Lopes C.R."/>
            <person name="Machado J.A."/>
            <person name="Machado M.A."/>
            <person name="Madeira A.M.B.N."/>
            <person name="Madeira H.M.F."/>
            <person name="Marino C.L."/>
            <person name="Marques M.V."/>
            <person name="Martins E.A.L."/>
            <person name="Martins E.M.F."/>
            <person name="Matsukuma A.Y."/>
            <person name="Menck C.F.M."/>
            <person name="Miracca E.C."/>
            <person name="Miyaki C.Y."/>
            <person name="Monteiro-Vitorello C.B."/>
            <person name="Moon D.H."/>
            <person name="Nagai M.A."/>
            <person name="Nascimento A.L.T.O."/>
            <person name="Netto L.E.S."/>
            <person name="Nhani A. Jr."/>
            <person name="Nobrega F.G."/>
            <person name="Nunes L.R."/>
            <person name="Oliveira M.A."/>
            <person name="de Oliveira M.C."/>
            <person name="de Oliveira R.C."/>
            <person name="Palmieri D.A."/>
            <person name="Paris A."/>
            <person name="Peixoto B.R."/>
            <person name="Pereira G.A.G."/>
            <person name="Pereira H.A. Jr."/>
            <person name="Pesquero J.B."/>
            <person name="Quaggio R.B."/>
            <person name="Roberto P.G."/>
            <person name="Rodrigues V."/>
            <person name="de Rosa A.J.M."/>
            <person name="de Rosa V.E. Jr."/>
            <person name="de Sa R.G."/>
            <person name="Santelli R.V."/>
            <person name="Sawasaki H.E."/>
            <person name="da Silva A.C.R."/>
            <person name="da Silva A.M."/>
            <person name="da Silva F.R."/>
            <person name="Silva W.A. Jr."/>
            <person name="da Silveira J.F."/>
            <person name="Silvestri M.L.Z."/>
            <person name="Siqueira W.J."/>
            <person name="de Souza A.A."/>
            <person name="de Souza A.P."/>
            <person name="Terenzi M.F."/>
            <person name="Truffi D."/>
            <person name="Tsai S.M."/>
            <person name="Tsuhako M.H."/>
            <person name="Vallada H."/>
            <person name="Van Sluys M.A."/>
            <person name="Verjovski-Almeida S."/>
            <person name="Vettore A.L."/>
            <person name="Zago M.A."/>
            <person name="Zatz M."/>
            <person name="Meidanis J."/>
            <person name="Setubal J.C."/>
        </authorList>
    </citation>
    <scope>NUCLEOTIDE SEQUENCE [LARGE SCALE GENOMIC DNA]</scope>
    <source>
        <strain>9a5c</strain>
    </source>
</reference>
<proteinExistence type="inferred from homology"/>
<sequence>MLVAIEGIDGAGKTTLARSLALKLRGVGLETVVSKEPTNGPWGMLLRQSAATGRFSPEEEVDVLLRDRRQHVEDLIVPMIGRGAVVILDRYFPSMVAYQGAAGLPVDALLEANAFAPRPDVLLLLDVPPAIGLQRIWERGSTPNHFETTENLSRCRDIFLALELPSKRVIDATANAETVLSAALALVMEVLRVRLGALGAVVLRRLAG</sequence>
<feature type="chain" id="PRO_0000155377" description="Thymidylate kinase">
    <location>
        <begin position="1"/>
        <end position="208"/>
    </location>
</feature>
<feature type="binding site" evidence="2">
    <location>
        <begin position="7"/>
        <end position="14"/>
    </location>
    <ligand>
        <name>ATP</name>
        <dbReference type="ChEBI" id="CHEBI:30616"/>
    </ligand>
</feature>
<accession>Q9PFS7</accession>
<keyword id="KW-0067">ATP-binding</keyword>
<keyword id="KW-0418">Kinase</keyword>
<keyword id="KW-0545">Nucleotide biosynthesis</keyword>
<keyword id="KW-0547">Nucleotide-binding</keyword>
<keyword id="KW-0808">Transferase</keyword>
<comment type="function">
    <text evidence="1">Phosphorylation of dTMP to form dTDP in both de novo and salvage pathways of dTTP synthesis.</text>
</comment>
<comment type="catalytic activity">
    <reaction>
        <text>dTMP + ATP = dTDP + ADP</text>
        <dbReference type="Rhea" id="RHEA:13517"/>
        <dbReference type="ChEBI" id="CHEBI:30616"/>
        <dbReference type="ChEBI" id="CHEBI:58369"/>
        <dbReference type="ChEBI" id="CHEBI:63528"/>
        <dbReference type="ChEBI" id="CHEBI:456216"/>
        <dbReference type="EC" id="2.7.4.9"/>
    </reaction>
</comment>
<comment type="similarity">
    <text evidence="3">Belongs to the thymidylate kinase family.</text>
</comment>
<comment type="sequence caution" evidence="3">
    <conflict type="erroneous initiation">
        <sequence resource="EMBL-CDS" id="AAF83390"/>
    </conflict>
</comment>
<gene>
    <name type="primary">tmk</name>
    <name type="ordered locus">XF_0580</name>
</gene>
<organism>
    <name type="scientific">Xylella fastidiosa (strain 9a5c)</name>
    <dbReference type="NCBI Taxonomy" id="160492"/>
    <lineage>
        <taxon>Bacteria</taxon>
        <taxon>Pseudomonadati</taxon>
        <taxon>Pseudomonadota</taxon>
        <taxon>Gammaproteobacteria</taxon>
        <taxon>Lysobacterales</taxon>
        <taxon>Lysobacteraceae</taxon>
        <taxon>Xylella</taxon>
    </lineage>
</organism>
<dbReference type="EC" id="2.7.4.9"/>
<dbReference type="EMBL" id="AE003849">
    <property type="protein sequence ID" value="AAF83390.1"/>
    <property type="status" value="ALT_INIT"/>
    <property type="molecule type" value="Genomic_DNA"/>
</dbReference>
<dbReference type="PIR" id="F82788">
    <property type="entry name" value="F82788"/>
</dbReference>
<dbReference type="SMR" id="Q9PFS7"/>
<dbReference type="STRING" id="160492.XF_0580"/>
<dbReference type="KEGG" id="xfa:XF_0580"/>
<dbReference type="eggNOG" id="COG0125">
    <property type="taxonomic scope" value="Bacteria"/>
</dbReference>
<dbReference type="HOGENOM" id="CLU_049131_0_2_6"/>
<dbReference type="Proteomes" id="UP000000812">
    <property type="component" value="Chromosome"/>
</dbReference>
<dbReference type="GO" id="GO:0005829">
    <property type="term" value="C:cytosol"/>
    <property type="evidence" value="ECO:0007669"/>
    <property type="project" value="TreeGrafter"/>
</dbReference>
<dbReference type="GO" id="GO:0005524">
    <property type="term" value="F:ATP binding"/>
    <property type="evidence" value="ECO:0007669"/>
    <property type="project" value="UniProtKB-UniRule"/>
</dbReference>
<dbReference type="GO" id="GO:0004798">
    <property type="term" value="F:dTMP kinase activity"/>
    <property type="evidence" value="ECO:0007669"/>
    <property type="project" value="UniProtKB-UniRule"/>
</dbReference>
<dbReference type="GO" id="GO:0006233">
    <property type="term" value="P:dTDP biosynthetic process"/>
    <property type="evidence" value="ECO:0007669"/>
    <property type="project" value="InterPro"/>
</dbReference>
<dbReference type="GO" id="GO:0006235">
    <property type="term" value="P:dTTP biosynthetic process"/>
    <property type="evidence" value="ECO:0007669"/>
    <property type="project" value="UniProtKB-UniRule"/>
</dbReference>
<dbReference type="GO" id="GO:0006227">
    <property type="term" value="P:dUDP biosynthetic process"/>
    <property type="evidence" value="ECO:0007669"/>
    <property type="project" value="TreeGrafter"/>
</dbReference>
<dbReference type="CDD" id="cd01672">
    <property type="entry name" value="TMPK"/>
    <property type="match status" value="1"/>
</dbReference>
<dbReference type="Gene3D" id="3.40.50.300">
    <property type="entry name" value="P-loop containing nucleotide triphosphate hydrolases"/>
    <property type="match status" value="1"/>
</dbReference>
<dbReference type="HAMAP" id="MF_00165">
    <property type="entry name" value="Thymidylate_kinase"/>
    <property type="match status" value="1"/>
</dbReference>
<dbReference type="InterPro" id="IPR027417">
    <property type="entry name" value="P-loop_NTPase"/>
</dbReference>
<dbReference type="InterPro" id="IPR039430">
    <property type="entry name" value="Thymidylate_kin-like_dom"/>
</dbReference>
<dbReference type="InterPro" id="IPR018094">
    <property type="entry name" value="Thymidylate_kinase"/>
</dbReference>
<dbReference type="NCBIfam" id="TIGR00041">
    <property type="entry name" value="DTMP_kinase"/>
    <property type="match status" value="1"/>
</dbReference>
<dbReference type="PANTHER" id="PTHR10344">
    <property type="entry name" value="THYMIDYLATE KINASE"/>
    <property type="match status" value="1"/>
</dbReference>
<dbReference type="PANTHER" id="PTHR10344:SF4">
    <property type="entry name" value="UMP-CMP KINASE 2, MITOCHONDRIAL"/>
    <property type="match status" value="1"/>
</dbReference>
<dbReference type="Pfam" id="PF02223">
    <property type="entry name" value="Thymidylate_kin"/>
    <property type="match status" value="1"/>
</dbReference>
<dbReference type="SUPFAM" id="SSF52540">
    <property type="entry name" value="P-loop containing nucleoside triphosphate hydrolases"/>
    <property type="match status" value="1"/>
</dbReference>
<name>KTHY_XYLFA</name>
<protein>
    <recommendedName>
        <fullName>Thymidylate kinase</fullName>
        <ecNumber>2.7.4.9</ecNumber>
    </recommendedName>
    <alternativeName>
        <fullName>dTMP kinase</fullName>
    </alternativeName>
</protein>